<reference key="1">
    <citation type="journal article" date="2008" name="PLoS ONE">
        <title>A recalibrated molecular clock and independent origins for the cholera pandemic clones.</title>
        <authorList>
            <person name="Feng L."/>
            <person name="Reeves P.R."/>
            <person name="Lan R."/>
            <person name="Ren Y."/>
            <person name="Gao C."/>
            <person name="Zhou Z."/>
            <person name="Ren Y."/>
            <person name="Cheng J."/>
            <person name="Wang W."/>
            <person name="Wang J."/>
            <person name="Qian W."/>
            <person name="Li D."/>
            <person name="Wang L."/>
        </authorList>
    </citation>
    <scope>NUCLEOTIDE SEQUENCE [LARGE SCALE GENOMIC DNA]</scope>
    <source>
        <strain>M66-2</strain>
    </source>
</reference>
<evidence type="ECO:0000255" key="1">
    <source>
        <dbReference type="HAMAP-Rule" id="MF_00056"/>
    </source>
</evidence>
<gene>
    <name evidence="1" type="primary">kdsA</name>
    <name type="ordered locus">VCM66_2098</name>
</gene>
<dbReference type="EC" id="2.5.1.55" evidence="1"/>
<dbReference type="EMBL" id="CP001233">
    <property type="protein sequence ID" value="ACP06400.1"/>
    <property type="molecule type" value="Genomic_DNA"/>
</dbReference>
<dbReference type="RefSeq" id="WP_000400335.1">
    <property type="nucleotide sequence ID" value="NC_012578.1"/>
</dbReference>
<dbReference type="SMR" id="C3LPI0"/>
<dbReference type="GeneID" id="69719211"/>
<dbReference type="KEGG" id="vcm:VCM66_2098"/>
<dbReference type="HOGENOM" id="CLU_036666_0_0_6"/>
<dbReference type="UniPathway" id="UPA00030"/>
<dbReference type="UniPathway" id="UPA00357">
    <property type="reaction ID" value="UER00474"/>
</dbReference>
<dbReference type="Proteomes" id="UP000001217">
    <property type="component" value="Chromosome I"/>
</dbReference>
<dbReference type="GO" id="GO:0005737">
    <property type="term" value="C:cytoplasm"/>
    <property type="evidence" value="ECO:0007669"/>
    <property type="project" value="UniProtKB-SubCell"/>
</dbReference>
<dbReference type="GO" id="GO:0008676">
    <property type="term" value="F:3-deoxy-8-phosphooctulonate synthase activity"/>
    <property type="evidence" value="ECO:0007669"/>
    <property type="project" value="UniProtKB-UniRule"/>
</dbReference>
<dbReference type="GO" id="GO:0019294">
    <property type="term" value="P:keto-3-deoxy-D-manno-octulosonic acid biosynthetic process"/>
    <property type="evidence" value="ECO:0007669"/>
    <property type="project" value="UniProtKB-UniRule"/>
</dbReference>
<dbReference type="FunFam" id="3.20.20.70:FF:000058">
    <property type="entry name" value="2-dehydro-3-deoxyphosphooctonate aldolase"/>
    <property type="match status" value="1"/>
</dbReference>
<dbReference type="Gene3D" id="3.20.20.70">
    <property type="entry name" value="Aldolase class I"/>
    <property type="match status" value="1"/>
</dbReference>
<dbReference type="HAMAP" id="MF_00056">
    <property type="entry name" value="KDO8P_synth"/>
    <property type="match status" value="1"/>
</dbReference>
<dbReference type="InterPro" id="IPR013785">
    <property type="entry name" value="Aldolase_TIM"/>
</dbReference>
<dbReference type="InterPro" id="IPR006218">
    <property type="entry name" value="DAHP1/KDSA"/>
</dbReference>
<dbReference type="InterPro" id="IPR006269">
    <property type="entry name" value="KDO8P_synthase"/>
</dbReference>
<dbReference type="NCBIfam" id="TIGR01362">
    <property type="entry name" value="KDO8P_synth"/>
    <property type="match status" value="1"/>
</dbReference>
<dbReference type="NCBIfam" id="NF003543">
    <property type="entry name" value="PRK05198.1"/>
    <property type="match status" value="1"/>
</dbReference>
<dbReference type="NCBIfam" id="NF009109">
    <property type="entry name" value="PRK12457.1"/>
    <property type="match status" value="1"/>
</dbReference>
<dbReference type="PANTHER" id="PTHR21057">
    <property type="entry name" value="PHOSPHO-2-DEHYDRO-3-DEOXYHEPTONATE ALDOLASE"/>
    <property type="match status" value="1"/>
</dbReference>
<dbReference type="Pfam" id="PF00793">
    <property type="entry name" value="DAHP_synth_1"/>
    <property type="match status" value="1"/>
</dbReference>
<dbReference type="SUPFAM" id="SSF51569">
    <property type="entry name" value="Aldolase"/>
    <property type="match status" value="1"/>
</dbReference>
<keyword id="KW-0963">Cytoplasm</keyword>
<keyword id="KW-0448">Lipopolysaccharide biosynthesis</keyword>
<keyword id="KW-0808">Transferase</keyword>
<name>KDSA_VIBCM</name>
<comment type="catalytic activity">
    <reaction evidence="1">
        <text>D-arabinose 5-phosphate + phosphoenolpyruvate + H2O = 3-deoxy-alpha-D-manno-2-octulosonate-8-phosphate + phosphate</text>
        <dbReference type="Rhea" id="RHEA:14053"/>
        <dbReference type="ChEBI" id="CHEBI:15377"/>
        <dbReference type="ChEBI" id="CHEBI:43474"/>
        <dbReference type="ChEBI" id="CHEBI:57693"/>
        <dbReference type="ChEBI" id="CHEBI:58702"/>
        <dbReference type="ChEBI" id="CHEBI:85985"/>
        <dbReference type="EC" id="2.5.1.55"/>
    </reaction>
</comment>
<comment type="pathway">
    <text evidence="1">Carbohydrate biosynthesis; 3-deoxy-D-manno-octulosonate biosynthesis; 3-deoxy-D-manno-octulosonate from D-ribulose 5-phosphate: step 2/3.</text>
</comment>
<comment type="pathway">
    <text evidence="1">Bacterial outer membrane biogenesis; lipopolysaccharide biosynthesis.</text>
</comment>
<comment type="subcellular location">
    <subcellularLocation>
        <location evidence="1">Cytoplasm</location>
    </subcellularLocation>
</comment>
<comment type="similarity">
    <text evidence="1">Belongs to the KdsA family.</text>
</comment>
<feature type="chain" id="PRO_1000117792" description="2-dehydro-3-deoxyphosphooctonate aldolase">
    <location>
        <begin position="1"/>
        <end position="283"/>
    </location>
</feature>
<organism>
    <name type="scientific">Vibrio cholerae serotype O1 (strain M66-2)</name>
    <dbReference type="NCBI Taxonomy" id="579112"/>
    <lineage>
        <taxon>Bacteria</taxon>
        <taxon>Pseudomonadati</taxon>
        <taxon>Pseudomonadota</taxon>
        <taxon>Gammaproteobacteria</taxon>
        <taxon>Vibrionales</taxon>
        <taxon>Vibrionaceae</taxon>
        <taxon>Vibrio</taxon>
    </lineage>
</organism>
<proteinExistence type="inferred from homology"/>
<protein>
    <recommendedName>
        <fullName evidence="1">2-dehydro-3-deoxyphosphooctonate aldolase</fullName>
        <ecNumber evidence="1">2.5.1.55</ecNumber>
    </recommendedName>
    <alternativeName>
        <fullName evidence="1">3-deoxy-D-manno-octulosonic acid 8-phosphate synthase</fullName>
    </alternativeName>
    <alternativeName>
        <fullName evidence="1">KDO-8-phosphate synthase</fullName>
        <shortName evidence="1">KDO 8-P synthase</shortName>
        <shortName evidence="1">KDOPS</shortName>
    </alternativeName>
    <alternativeName>
        <fullName evidence="1">Phospho-2-dehydro-3-deoxyoctonate aldolase</fullName>
    </alternativeName>
</protein>
<accession>C3LPI0</accession>
<sequence>MEHKIVHVGDIPVANDKPFTLFAGMNVLESRDLAMQICEHYVKVTDKLGIPYVFKASFDKANRSSVHSYRGPGLEEGMKIFQELKETFGVKIITDVHTEAQAQPVADVVDVIQLPAFLARQTDLVEAMAKTGAVINVKKPQFMSPGQVGNIVEKFAECGNDKVILCERGSCHGYDNLVVDMLGFGVMKQASNGSPIIFDVTHSLQMRDPSGAASGGRREQTVELAKAGLATGIAGLFIEAHPNPDKARCDGPSALPLDKLEPFLAQMKALDDLIKSFAHIDIR</sequence>